<organism>
    <name type="scientific">Xenopus laevis</name>
    <name type="common">African clawed frog</name>
    <dbReference type="NCBI Taxonomy" id="8355"/>
    <lineage>
        <taxon>Eukaryota</taxon>
        <taxon>Metazoa</taxon>
        <taxon>Chordata</taxon>
        <taxon>Craniata</taxon>
        <taxon>Vertebrata</taxon>
        <taxon>Euteleostomi</taxon>
        <taxon>Amphibia</taxon>
        <taxon>Batrachia</taxon>
        <taxon>Anura</taxon>
        <taxon>Pipoidea</taxon>
        <taxon>Pipidae</taxon>
        <taxon>Xenopodinae</taxon>
        <taxon>Xenopus</taxon>
        <taxon>Xenopus</taxon>
    </lineage>
</organism>
<evidence type="ECO:0000250" key="1"/>
<evidence type="ECO:0000250" key="2">
    <source>
        <dbReference type="UniProtKB" id="Q96RS6"/>
    </source>
</evidence>
<evidence type="ECO:0000255" key="3">
    <source>
        <dbReference type="PROSITE-ProRule" id="PRU00547"/>
    </source>
</evidence>
<evidence type="ECO:0000312" key="4">
    <source>
        <dbReference type="EMBL" id="AAH56062.1"/>
    </source>
</evidence>
<feature type="chain" id="PRO_0000307707" description="NudC domain-containing protein 1">
    <location>
        <begin position="1"/>
        <end position="586"/>
    </location>
</feature>
<feature type="domain" description="CS" evidence="3">
    <location>
        <begin position="275"/>
        <end position="364"/>
    </location>
</feature>
<sequence length="586" mass="66425">MEGANCSLKVNRHLLDPKFESYKLSLDPLPCYNVELDAAVAEVTLRDDQYTLDHMRAFGMYNYLHCNPWLPNSVFYIDQLKRVMSFTVTLDTAMGKPIEVFRFPRDLNACDNRLCSSMHFASAQWVTLSDGTGTLYIIRIGNQSDSLSGKWEIMFNQELGEPFIVVHSISSVRDELHVIDVLLLSVEKDESDIEGSGFHVCLEWVSAARAQNQENGEYEILKRRKLFGKSVPHYAAIEPLGNGVMMISYKPFRFIANEKDPHEPSEDEKMDEDNKREPLYNWQQTGEEVTLTFLLPEGKTKEDLNIKFLPGEIDISIKDQGTFLKGQLYSDVDCESSAWIMKEGRGVEVTLTKREPGCTWAELVIADKQGEYIADPAQTAAIAEKLMHLTSEDINPNPESEKPPCNAQELEECDIFLEDSTNLCRFDGTHLKATHVVNLGSNPYLFTFVATPELMPCFALRHDVDALLWQPVSEQPDNLWEHIATFNALGYVQASKQDKKFFTCAPNFSYSALCECVRRIFIYRQPTPVSTELYNRKEGRRVGQVAKQQVASLETTDPILGFQASNERLFVLTTKTLSVIKVNSTA</sequence>
<dbReference type="EMBL" id="BC056062">
    <property type="protein sequence ID" value="AAH56062.1"/>
    <property type="molecule type" value="mRNA"/>
</dbReference>
<dbReference type="SMR" id="Q7T0S2"/>
<dbReference type="DNASU" id="380474"/>
<dbReference type="KEGG" id="xla:380474"/>
<dbReference type="AGR" id="Xenbase:XB-GENE-865218"/>
<dbReference type="CTD" id="380474"/>
<dbReference type="Xenbase" id="XB-GENE-865218">
    <property type="gene designation" value="nudcd1.S"/>
</dbReference>
<dbReference type="OrthoDB" id="428655at2759"/>
<dbReference type="Proteomes" id="UP000186698">
    <property type="component" value="Chromosome 6S"/>
</dbReference>
<dbReference type="Bgee" id="380474">
    <property type="expression patterns" value="Expressed in egg cell and 19 other cell types or tissues"/>
</dbReference>
<dbReference type="GO" id="GO:0005737">
    <property type="term" value="C:cytoplasm"/>
    <property type="evidence" value="ECO:0007669"/>
    <property type="project" value="UniProtKB-SubCell"/>
</dbReference>
<dbReference type="GO" id="GO:0005634">
    <property type="term" value="C:nucleus"/>
    <property type="evidence" value="ECO:0007669"/>
    <property type="project" value="UniProtKB-SubCell"/>
</dbReference>
<dbReference type="CDD" id="cd06493">
    <property type="entry name" value="p23_NUDCD1_like"/>
    <property type="match status" value="1"/>
</dbReference>
<dbReference type="Gene3D" id="2.60.40.790">
    <property type="match status" value="1"/>
</dbReference>
<dbReference type="InterPro" id="IPR007052">
    <property type="entry name" value="CS_dom"/>
</dbReference>
<dbReference type="InterPro" id="IPR008978">
    <property type="entry name" value="HSP20-like_chaperone"/>
</dbReference>
<dbReference type="InterPro" id="IPR037895">
    <property type="entry name" value="NUDCD1"/>
</dbReference>
<dbReference type="PANTHER" id="PTHR21664">
    <property type="entry name" value="CHRONIC MYELOGENOUS LEUKEMIA TUMOR ANTIGEN 66"/>
    <property type="match status" value="1"/>
</dbReference>
<dbReference type="PANTHER" id="PTHR21664:SF1">
    <property type="entry name" value="NUDC DOMAIN-CONTAINING PROTEIN 1"/>
    <property type="match status" value="1"/>
</dbReference>
<dbReference type="Pfam" id="PF04969">
    <property type="entry name" value="CS"/>
    <property type="match status" value="1"/>
</dbReference>
<dbReference type="SUPFAM" id="SSF49764">
    <property type="entry name" value="HSP20-like chaperones"/>
    <property type="match status" value="1"/>
</dbReference>
<dbReference type="PROSITE" id="PS51203">
    <property type="entry name" value="CS"/>
    <property type="match status" value="1"/>
</dbReference>
<reference evidence="4" key="1">
    <citation type="submission" date="2003-08" db="EMBL/GenBank/DDBJ databases">
        <authorList>
            <consortium name="NIH - Xenopus Gene Collection (XGC) project"/>
        </authorList>
    </citation>
    <scope>NUCLEOTIDE SEQUENCE [LARGE SCALE MRNA]</scope>
    <source>
        <tissue evidence="4">Spleen</tissue>
    </source>
</reference>
<name>NUDC1_XENLA</name>
<proteinExistence type="evidence at transcript level"/>
<keyword id="KW-0963">Cytoplasm</keyword>
<keyword id="KW-0539">Nucleus</keyword>
<keyword id="KW-1185">Reference proteome</keyword>
<accession>Q7T0S2</accession>
<gene>
    <name evidence="2" type="primary">nudcd1</name>
</gene>
<protein>
    <recommendedName>
        <fullName>NudC domain-containing protein 1</fullName>
    </recommendedName>
</protein>
<comment type="subcellular location">
    <subcellularLocation>
        <location evidence="1">Cytoplasm</location>
    </subcellularLocation>
    <subcellularLocation>
        <location evidence="1">Nucleus</location>
    </subcellularLocation>
</comment>